<comment type="similarity">
    <text evidence="1">Belongs to the UPF0134 family.</text>
</comment>
<name>Y287_MYCPN</name>
<gene>
    <name type="ordered locus">MPN_287</name>
    <name type="ORF">A65_orf118</name>
    <name type="ORF">MP548</name>
</gene>
<keyword id="KW-1185">Reference proteome</keyword>
<sequence>MGFSDNLNHMEKRKSGYVTQKQFSEFKDANNQRLIKIETTLATQGEQLNQLIKVVILQGEQIKELQVEQKAQGEQIKAKGEQIKAQSEQIKTQGETLKLILQALGGINKRLDKVDPPK</sequence>
<dbReference type="EMBL" id="U00089">
    <property type="protein sequence ID" value="AAB96196.1"/>
    <property type="molecule type" value="Genomic_DNA"/>
</dbReference>
<dbReference type="PIR" id="S73874">
    <property type="entry name" value="S73874"/>
</dbReference>
<dbReference type="RefSeq" id="NP_109975.1">
    <property type="nucleotide sequence ID" value="NC_000912.1"/>
</dbReference>
<dbReference type="SMR" id="P75490"/>
<dbReference type="STRING" id="272634.MPN_287"/>
<dbReference type="EnsemblBacteria" id="AAB96196">
    <property type="protein sequence ID" value="AAB96196"/>
    <property type="gene ID" value="MPN_287"/>
</dbReference>
<dbReference type="KEGG" id="mpn:MPN_287"/>
<dbReference type="PATRIC" id="fig|272634.6.peg.311"/>
<dbReference type="HOGENOM" id="CLU_089620_0_0_14"/>
<dbReference type="BioCyc" id="MPNE272634:G1GJ3-452-MONOMER"/>
<dbReference type="Proteomes" id="UP000000808">
    <property type="component" value="Chromosome"/>
</dbReference>
<dbReference type="Gene3D" id="6.10.250.40">
    <property type="match status" value="2"/>
</dbReference>
<dbReference type="InterPro" id="IPR002862">
    <property type="entry name" value="DUF16"/>
</dbReference>
<dbReference type="Pfam" id="PF01519">
    <property type="entry name" value="DUF16"/>
    <property type="match status" value="1"/>
</dbReference>
<dbReference type="SUPFAM" id="SSF144266">
    <property type="entry name" value="MPN010-like"/>
    <property type="match status" value="2"/>
</dbReference>
<protein>
    <recommendedName>
        <fullName>UPF0134 protein MPN_287</fullName>
    </recommendedName>
</protein>
<reference key="1">
    <citation type="journal article" date="1996" name="Nucleic Acids Res.">
        <title>Complete sequence analysis of the genome of the bacterium Mycoplasma pneumoniae.</title>
        <authorList>
            <person name="Himmelreich R."/>
            <person name="Hilbert H."/>
            <person name="Plagens H."/>
            <person name="Pirkl E."/>
            <person name="Li B.-C."/>
            <person name="Herrmann R."/>
        </authorList>
    </citation>
    <scope>NUCLEOTIDE SEQUENCE [LARGE SCALE GENOMIC DNA]</scope>
    <source>
        <strain>ATCC 29342 / M129 / Subtype 1</strain>
    </source>
</reference>
<evidence type="ECO:0000305" key="1"/>
<organism>
    <name type="scientific">Mycoplasma pneumoniae (strain ATCC 29342 / M129 / Subtype 1)</name>
    <name type="common">Mycoplasmoides pneumoniae</name>
    <dbReference type="NCBI Taxonomy" id="272634"/>
    <lineage>
        <taxon>Bacteria</taxon>
        <taxon>Bacillati</taxon>
        <taxon>Mycoplasmatota</taxon>
        <taxon>Mycoplasmoidales</taxon>
        <taxon>Mycoplasmoidaceae</taxon>
        <taxon>Mycoplasmoides</taxon>
    </lineage>
</organism>
<feature type="chain" id="PRO_0000221605" description="UPF0134 protein MPN_287">
    <location>
        <begin position="1"/>
        <end position="118"/>
    </location>
</feature>
<proteinExistence type="inferred from homology"/>
<accession>P75490</accession>